<proteinExistence type="inferred from homology"/>
<sequence>MAATKRAACLIGWPAAHSRSPLIHHYWLRRLGIEGGYSIEAVPPEGFAEFVLHLKTHGYVGANVTIPHKERALQLTEPDERARAVGAANTLYYDGDLLRSTNTDIEGFIGNLDASAPGWDRSPHAVVLGAGGSSRAVVFGLLERGVQRIALANRSIERAQALRDLFGERVVPIAWSDIPAALPGAGLLVNTTSLGMKGQPPLQIDLSALPADAVVSDLVYVPLETDLLAAAKARGLRTADGLGMLLHQAVRGFDLWFGARPHVTAELRALVEADLAPK</sequence>
<organism>
    <name type="scientific">Rhodopseudomonas palustris (strain TIE-1)</name>
    <dbReference type="NCBI Taxonomy" id="395960"/>
    <lineage>
        <taxon>Bacteria</taxon>
        <taxon>Pseudomonadati</taxon>
        <taxon>Pseudomonadota</taxon>
        <taxon>Alphaproteobacteria</taxon>
        <taxon>Hyphomicrobiales</taxon>
        <taxon>Nitrobacteraceae</taxon>
        <taxon>Rhodopseudomonas</taxon>
    </lineage>
</organism>
<accession>B3Q7T8</accession>
<evidence type="ECO:0000255" key="1">
    <source>
        <dbReference type="HAMAP-Rule" id="MF_00222"/>
    </source>
</evidence>
<protein>
    <recommendedName>
        <fullName evidence="1">Shikimate dehydrogenase (NADP(+))</fullName>
        <shortName evidence="1">SDH</shortName>
        <ecNumber evidence="1">1.1.1.25</ecNumber>
    </recommendedName>
</protein>
<keyword id="KW-0028">Amino-acid biosynthesis</keyword>
<keyword id="KW-0057">Aromatic amino acid biosynthesis</keyword>
<keyword id="KW-0521">NADP</keyword>
<keyword id="KW-0560">Oxidoreductase</keyword>
<comment type="function">
    <text evidence="1">Involved in the biosynthesis of the chorismate, which leads to the biosynthesis of aromatic amino acids. Catalyzes the reversible NADPH linked reduction of 3-dehydroshikimate (DHSA) to yield shikimate (SA).</text>
</comment>
<comment type="catalytic activity">
    <reaction evidence="1">
        <text>shikimate + NADP(+) = 3-dehydroshikimate + NADPH + H(+)</text>
        <dbReference type="Rhea" id="RHEA:17737"/>
        <dbReference type="ChEBI" id="CHEBI:15378"/>
        <dbReference type="ChEBI" id="CHEBI:16630"/>
        <dbReference type="ChEBI" id="CHEBI:36208"/>
        <dbReference type="ChEBI" id="CHEBI:57783"/>
        <dbReference type="ChEBI" id="CHEBI:58349"/>
        <dbReference type="EC" id="1.1.1.25"/>
    </reaction>
</comment>
<comment type="pathway">
    <text evidence="1">Metabolic intermediate biosynthesis; chorismate biosynthesis; chorismate from D-erythrose 4-phosphate and phosphoenolpyruvate: step 4/7.</text>
</comment>
<comment type="subunit">
    <text evidence="1">Homodimer.</text>
</comment>
<comment type="similarity">
    <text evidence="1">Belongs to the shikimate dehydrogenase family.</text>
</comment>
<dbReference type="EC" id="1.1.1.25" evidence="1"/>
<dbReference type="EMBL" id="CP001096">
    <property type="protein sequence ID" value="ACF03293.1"/>
    <property type="molecule type" value="Genomic_DNA"/>
</dbReference>
<dbReference type="RefSeq" id="WP_012497532.1">
    <property type="nucleotide sequence ID" value="NC_011004.1"/>
</dbReference>
<dbReference type="SMR" id="B3Q7T8"/>
<dbReference type="KEGG" id="rpt:Rpal_4803"/>
<dbReference type="HOGENOM" id="CLU_044063_2_0_5"/>
<dbReference type="OrthoDB" id="9792692at2"/>
<dbReference type="UniPathway" id="UPA00053">
    <property type="reaction ID" value="UER00087"/>
</dbReference>
<dbReference type="Proteomes" id="UP000001725">
    <property type="component" value="Chromosome"/>
</dbReference>
<dbReference type="GO" id="GO:0005829">
    <property type="term" value="C:cytosol"/>
    <property type="evidence" value="ECO:0007669"/>
    <property type="project" value="TreeGrafter"/>
</dbReference>
<dbReference type="GO" id="GO:0050661">
    <property type="term" value="F:NADP binding"/>
    <property type="evidence" value="ECO:0007669"/>
    <property type="project" value="InterPro"/>
</dbReference>
<dbReference type="GO" id="GO:0004764">
    <property type="term" value="F:shikimate 3-dehydrogenase (NADP+) activity"/>
    <property type="evidence" value="ECO:0007669"/>
    <property type="project" value="UniProtKB-UniRule"/>
</dbReference>
<dbReference type="GO" id="GO:0008652">
    <property type="term" value="P:amino acid biosynthetic process"/>
    <property type="evidence" value="ECO:0007669"/>
    <property type="project" value="UniProtKB-KW"/>
</dbReference>
<dbReference type="GO" id="GO:0009073">
    <property type="term" value="P:aromatic amino acid family biosynthetic process"/>
    <property type="evidence" value="ECO:0007669"/>
    <property type="project" value="UniProtKB-KW"/>
</dbReference>
<dbReference type="GO" id="GO:0009423">
    <property type="term" value="P:chorismate biosynthetic process"/>
    <property type="evidence" value="ECO:0007669"/>
    <property type="project" value="UniProtKB-UniRule"/>
</dbReference>
<dbReference type="GO" id="GO:0019632">
    <property type="term" value="P:shikimate metabolic process"/>
    <property type="evidence" value="ECO:0007669"/>
    <property type="project" value="InterPro"/>
</dbReference>
<dbReference type="CDD" id="cd01065">
    <property type="entry name" value="NAD_bind_Shikimate_DH"/>
    <property type="match status" value="1"/>
</dbReference>
<dbReference type="Gene3D" id="3.40.50.10860">
    <property type="entry name" value="Leucine Dehydrogenase, chain A, domain 1"/>
    <property type="match status" value="1"/>
</dbReference>
<dbReference type="Gene3D" id="3.40.50.720">
    <property type="entry name" value="NAD(P)-binding Rossmann-like Domain"/>
    <property type="match status" value="1"/>
</dbReference>
<dbReference type="HAMAP" id="MF_00222">
    <property type="entry name" value="Shikimate_DH_AroE"/>
    <property type="match status" value="1"/>
</dbReference>
<dbReference type="InterPro" id="IPR046346">
    <property type="entry name" value="Aminoacid_DH-like_N_sf"/>
</dbReference>
<dbReference type="InterPro" id="IPR036291">
    <property type="entry name" value="NAD(P)-bd_dom_sf"/>
</dbReference>
<dbReference type="InterPro" id="IPR041121">
    <property type="entry name" value="SDH_C"/>
</dbReference>
<dbReference type="InterPro" id="IPR011342">
    <property type="entry name" value="Shikimate_DH"/>
</dbReference>
<dbReference type="InterPro" id="IPR013708">
    <property type="entry name" value="Shikimate_DH-bd_N"/>
</dbReference>
<dbReference type="InterPro" id="IPR022893">
    <property type="entry name" value="Shikimate_DH_fam"/>
</dbReference>
<dbReference type="InterPro" id="IPR006151">
    <property type="entry name" value="Shikm_DH/Glu-tRNA_Rdtase"/>
</dbReference>
<dbReference type="NCBIfam" id="TIGR00507">
    <property type="entry name" value="aroE"/>
    <property type="match status" value="1"/>
</dbReference>
<dbReference type="NCBIfam" id="NF001312">
    <property type="entry name" value="PRK00258.1-4"/>
    <property type="match status" value="1"/>
</dbReference>
<dbReference type="PANTHER" id="PTHR21089:SF1">
    <property type="entry name" value="BIFUNCTIONAL 3-DEHYDROQUINATE DEHYDRATASE_SHIKIMATE DEHYDROGENASE, CHLOROPLASTIC"/>
    <property type="match status" value="1"/>
</dbReference>
<dbReference type="PANTHER" id="PTHR21089">
    <property type="entry name" value="SHIKIMATE DEHYDROGENASE"/>
    <property type="match status" value="1"/>
</dbReference>
<dbReference type="Pfam" id="PF18317">
    <property type="entry name" value="SDH_C"/>
    <property type="match status" value="1"/>
</dbReference>
<dbReference type="Pfam" id="PF01488">
    <property type="entry name" value="Shikimate_DH"/>
    <property type="match status" value="1"/>
</dbReference>
<dbReference type="Pfam" id="PF08501">
    <property type="entry name" value="Shikimate_dh_N"/>
    <property type="match status" value="1"/>
</dbReference>
<dbReference type="SUPFAM" id="SSF53223">
    <property type="entry name" value="Aminoacid dehydrogenase-like, N-terminal domain"/>
    <property type="match status" value="1"/>
</dbReference>
<dbReference type="SUPFAM" id="SSF51735">
    <property type="entry name" value="NAD(P)-binding Rossmann-fold domains"/>
    <property type="match status" value="1"/>
</dbReference>
<gene>
    <name evidence="1" type="primary">aroE</name>
    <name type="ordered locus">Rpal_4803</name>
</gene>
<feature type="chain" id="PRO_1000100133" description="Shikimate dehydrogenase (NADP(+))">
    <location>
        <begin position="1"/>
        <end position="278"/>
    </location>
</feature>
<feature type="active site" description="Proton acceptor" evidence="1">
    <location>
        <position position="69"/>
    </location>
</feature>
<feature type="binding site" evidence="1">
    <location>
        <begin position="18"/>
        <end position="20"/>
    </location>
    <ligand>
        <name>shikimate</name>
        <dbReference type="ChEBI" id="CHEBI:36208"/>
    </ligand>
</feature>
<feature type="binding site" evidence="1">
    <location>
        <position position="65"/>
    </location>
    <ligand>
        <name>shikimate</name>
        <dbReference type="ChEBI" id="CHEBI:36208"/>
    </ligand>
</feature>
<feature type="binding site" evidence="1">
    <location>
        <position position="80"/>
    </location>
    <ligand>
        <name>NADP(+)</name>
        <dbReference type="ChEBI" id="CHEBI:58349"/>
    </ligand>
</feature>
<feature type="binding site" evidence="1">
    <location>
        <position position="89"/>
    </location>
    <ligand>
        <name>shikimate</name>
        <dbReference type="ChEBI" id="CHEBI:36208"/>
    </ligand>
</feature>
<feature type="binding site" evidence="1">
    <location>
        <position position="104"/>
    </location>
    <ligand>
        <name>shikimate</name>
        <dbReference type="ChEBI" id="CHEBI:36208"/>
    </ligand>
</feature>
<feature type="binding site" evidence="1">
    <location>
        <begin position="129"/>
        <end position="133"/>
    </location>
    <ligand>
        <name>NADP(+)</name>
        <dbReference type="ChEBI" id="CHEBI:58349"/>
    </ligand>
</feature>
<feature type="binding site" evidence="1">
    <location>
        <position position="218"/>
    </location>
    <ligand>
        <name>NADP(+)</name>
        <dbReference type="ChEBI" id="CHEBI:58349"/>
    </ligand>
</feature>
<feature type="binding site" evidence="1">
    <location>
        <position position="220"/>
    </location>
    <ligand>
        <name>shikimate</name>
        <dbReference type="ChEBI" id="CHEBI:36208"/>
    </ligand>
</feature>
<feature type="binding site" evidence="1">
    <location>
        <position position="241"/>
    </location>
    <ligand>
        <name>NADP(+)</name>
        <dbReference type="ChEBI" id="CHEBI:58349"/>
    </ligand>
</feature>
<name>AROE_RHOPT</name>
<reference key="1">
    <citation type="submission" date="2008-05" db="EMBL/GenBank/DDBJ databases">
        <title>Complete sequence of Rhodopseudomonas palustris TIE-1.</title>
        <authorList>
            <consortium name="US DOE Joint Genome Institute"/>
            <person name="Lucas S."/>
            <person name="Copeland A."/>
            <person name="Lapidus A."/>
            <person name="Glavina del Rio T."/>
            <person name="Dalin E."/>
            <person name="Tice H."/>
            <person name="Pitluck S."/>
            <person name="Chain P."/>
            <person name="Malfatti S."/>
            <person name="Shin M."/>
            <person name="Vergez L."/>
            <person name="Lang D."/>
            <person name="Schmutz J."/>
            <person name="Larimer F."/>
            <person name="Land M."/>
            <person name="Hauser L."/>
            <person name="Kyrpides N."/>
            <person name="Mikhailova N."/>
            <person name="Emerson D."/>
            <person name="Newman D.K."/>
            <person name="Roden E."/>
            <person name="Richardson P."/>
        </authorList>
    </citation>
    <scope>NUCLEOTIDE SEQUENCE [LARGE SCALE GENOMIC DNA]</scope>
    <source>
        <strain>TIE-1</strain>
    </source>
</reference>